<name>YBEY_STRM5</name>
<dbReference type="EC" id="3.1.-.-" evidence="1"/>
<dbReference type="EMBL" id="CP001111">
    <property type="protein sequence ID" value="ACF51057.1"/>
    <property type="molecule type" value="Genomic_DNA"/>
</dbReference>
<dbReference type="RefSeq" id="WP_012510583.1">
    <property type="nucleotide sequence ID" value="NC_011071.1"/>
</dbReference>
<dbReference type="SMR" id="B4SQK2"/>
<dbReference type="STRING" id="391008.Smal_1352"/>
<dbReference type="KEGG" id="smt:Smal_1352"/>
<dbReference type="eggNOG" id="COG0319">
    <property type="taxonomic scope" value="Bacteria"/>
</dbReference>
<dbReference type="HOGENOM" id="CLU_106710_0_1_6"/>
<dbReference type="OrthoDB" id="9807740at2"/>
<dbReference type="Proteomes" id="UP000001867">
    <property type="component" value="Chromosome"/>
</dbReference>
<dbReference type="GO" id="GO:0005737">
    <property type="term" value="C:cytoplasm"/>
    <property type="evidence" value="ECO:0007669"/>
    <property type="project" value="UniProtKB-SubCell"/>
</dbReference>
<dbReference type="GO" id="GO:0004222">
    <property type="term" value="F:metalloendopeptidase activity"/>
    <property type="evidence" value="ECO:0007669"/>
    <property type="project" value="InterPro"/>
</dbReference>
<dbReference type="GO" id="GO:0004521">
    <property type="term" value="F:RNA endonuclease activity"/>
    <property type="evidence" value="ECO:0007669"/>
    <property type="project" value="UniProtKB-UniRule"/>
</dbReference>
<dbReference type="GO" id="GO:0008270">
    <property type="term" value="F:zinc ion binding"/>
    <property type="evidence" value="ECO:0007669"/>
    <property type="project" value="UniProtKB-UniRule"/>
</dbReference>
<dbReference type="GO" id="GO:0006364">
    <property type="term" value="P:rRNA processing"/>
    <property type="evidence" value="ECO:0007669"/>
    <property type="project" value="UniProtKB-UniRule"/>
</dbReference>
<dbReference type="Gene3D" id="3.40.390.30">
    <property type="entry name" value="Metalloproteases ('zincins'), catalytic domain"/>
    <property type="match status" value="1"/>
</dbReference>
<dbReference type="HAMAP" id="MF_00009">
    <property type="entry name" value="Endoribonucl_YbeY"/>
    <property type="match status" value="1"/>
</dbReference>
<dbReference type="InterPro" id="IPR023091">
    <property type="entry name" value="MetalPrtase_cat_dom_sf_prd"/>
</dbReference>
<dbReference type="InterPro" id="IPR002036">
    <property type="entry name" value="YbeY"/>
</dbReference>
<dbReference type="InterPro" id="IPR020549">
    <property type="entry name" value="YbeY_CS"/>
</dbReference>
<dbReference type="NCBIfam" id="TIGR00043">
    <property type="entry name" value="rRNA maturation RNase YbeY"/>
    <property type="match status" value="1"/>
</dbReference>
<dbReference type="PANTHER" id="PTHR46986">
    <property type="entry name" value="ENDORIBONUCLEASE YBEY, CHLOROPLASTIC"/>
    <property type="match status" value="1"/>
</dbReference>
<dbReference type="PANTHER" id="PTHR46986:SF1">
    <property type="entry name" value="ENDORIBONUCLEASE YBEY, CHLOROPLASTIC"/>
    <property type="match status" value="1"/>
</dbReference>
<dbReference type="Pfam" id="PF02130">
    <property type="entry name" value="YbeY"/>
    <property type="match status" value="1"/>
</dbReference>
<dbReference type="SUPFAM" id="SSF55486">
    <property type="entry name" value="Metalloproteases ('zincins'), catalytic domain"/>
    <property type="match status" value="1"/>
</dbReference>
<dbReference type="PROSITE" id="PS01306">
    <property type="entry name" value="UPF0054"/>
    <property type="match status" value="1"/>
</dbReference>
<sequence>MTRGPVRLDVAISYALPRAGLPAAVSFRKWVAAALKGRIREADLAIRVVDAKEGQSLNRHYRGKDYATNVLSFPADVPEGLPKGVKFPLLGDLVICAPVVAREADEQGKALNAHYAHLTVHGVLHLLGWDHEDDKEAEAMEQLEREILAELGIADPYAGER</sequence>
<proteinExistence type="inferred from homology"/>
<feature type="chain" id="PRO_1000089213" description="Endoribonuclease YbeY">
    <location>
        <begin position="1"/>
        <end position="161"/>
    </location>
</feature>
<feature type="binding site" evidence="1">
    <location>
        <position position="121"/>
    </location>
    <ligand>
        <name>Zn(2+)</name>
        <dbReference type="ChEBI" id="CHEBI:29105"/>
        <note>catalytic</note>
    </ligand>
</feature>
<feature type="binding site" evidence="1">
    <location>
        <position position="125"/>
    </location>
    <ligand>
        <name>Zn(2+)</name>
        <dbReference type="ChEBI" id="CHEBI:29105"/>
        <note>catalytic</note>
    </ligand>
</feature>
<feature type="binding site" evidence="1">
    <location>
        <position position="131"/>
    </location>
    <ligand>
        <name>Zn(2+)</name>
        <dbReference type="ChEBI" id="CHEBI:29105"/>
        <note>catalytic</note>
    </ligand>
</feature>
<comment type="function">
    <text evidence="1">Single strand-specific metallo-endoribonuclease involved in late-stage 70S ribosome quality control and in maturation of the 3' terminus of the 16S rRNA.</text>
</comment>
<comment type="cofactor">
    <cofactor evidence="1">
        <name>Zn(2+)</name>
        <dbReference type="ChEBI" id="CHEBI:29105"/>
    </cofactor>
    <text evidence="1">Binds 1 zinc ion.</text>
</comment>
<comment type="subcellular location">
    <subcellularLocation>
        <location evidence="1">Cytoplasm</location>
    </subcellularLocation>
</comment>
<comment type="similarity">
    <text evidence="1">Belongs to the endoribonuclease YbeY family.</text>
</comment>
<gene>
    <name evidence="1" type="primary">ybeY</name>
    <name type="ordered locus">Smal_1352</name>
</gene>
<organism>
    <name type="scientific">Stenotrophomonas maltophilia (strain R551-3)</name>
    <dbReference type="NCBI Taxonomy" id="391008"/>
    <lineage>
        <taxon>Bacteria</taxon>
        <taxon>Pseudomonadati</taxon>
        <taxon>Pseudomonadota</taxon>
        <taxon>Gammaproteobacteria</taxon>
        <taxon>Lysobacterales</taxon>
        <taxon>Lysobacteraceae</taxon>
        <taxon>Stenotrophomonas</taxon>
        <taxon>Stenotrophomonas maltophilia group</taxon>
    </lineage>
</organism>
<keyword id="KW-0963">Cytoplasm</keyword>
<keyword id="KW-0255">Endonuclease</keyword>
<keyword id="KW-0378">Hydrolase</keyword>
<keyword id="KW-0479">Metal-binding</keyword>
<keyword id="KW-0540">Nuclease</keyword>
<keyword id="KW-0690">Ribosome biogenesis</keyword>
<keyword id="KW-0698">rRNA processing</keyword>
<keyword id="KW-0862">Zinc</keyword>
<reference key="1">
    <citation type="submission" date="2008-06" db="EMBL/GenBank/DDBJ databases">
        <title>Complete sequence of Stenotrophomonas maltophilia R551-3.</title>
        <authorList>
            <consortium name="US DOE Joint Genome Institute"/>
            <person name="Lucas S."/>
            <person name="Copeland A."/>
            <person name="Lapidus A."/>
            <person name="Glavina del Rio T."/>
            <person name="Dalin E."/>
            <person name="Tice H."/>
            <person name="Pitluck S."/>
            <person name="Chain P."/>
            <person name="Malfatti S."/>
            <person name="Shin M."/>
            <person name="Vergez L."/>
            <person name="Lang D."/>
            <person name="Schmutz J."/>
            <person name="Larimer F."/>
            <person name="Land M."/>
            <person name="Hauser L."/>
            <person name="Kyrpides N."/>
            <person name="Mikhailova N."/>
            <person name="Taghavi S."/>
            <person name="Monchy S."/>
            <person name="Newman L."/>
            <person name="Vangronsveld J."/>
            <person name="van der Lelie D."/>
            <person name="Richardson P."/>
        </authorList>
    </citation>
    <scope>NUCLEOTIDE SEQUENCE [LARGE SCALE GENOMIC DNA]</scope>
    <source>
        <strain>R551-3</strain>
    </source>
</reference>
<protein>
    <recommendedName>
        <fullName evidence="1">Endoribonuclease YbeY</fullName>
        <ecNumber evidence="1">3.1.-.-</ecNumber>
    </recommendedName>
</protein>
<evidence type="ECO:0000255" key="1">
    <source>
        <dbReference type="HAMAP-Rule" id="MF_00009"/>
    </source>
</evidence>
<accession>B4SQK2</accession>